<organism>
    <name type="scientific">Arabidopsis thaliana</name>
    <name type="common">Mouse-ear cress</name>
    <dbReference type="NCBI Taxonomy" id="3702"/>
    <lineage>
        <taxon>Eukaryota</taxon>
        <taxon>Viridiplantae</taxon>
        <taxon>Streptophyta</taxon>
        <taxon>Embryophyta</taxon>
        <taxon>Tracheophyta</taxon>
        <taxon>Spermatophyta</taxon>
        <taxon>Magnoliopsida</taxon>
        <taxon>eudicotyledons</taxon>
        <taxon>Gunneridae</taxon>
        <taxon>Pentapetalae</taxon>
        <taxon>rosids</taxon>
        <taxon>malvids</taxon>
        <taxon>Brassicales</taxon>
        <taxon>Brassicaceae</taxon>
        <taxon>Camelineae</taxon>
        <taxon>Arabidopsis</taxon>
    </lineage>
</organism>
<protein>
    <recommendedName>
        <fullName>Defensin-like protein 49</fullName>
    </recommendedName>
</protein>
<evidence type="ECO:0000250" key="1"/>
<evidence type="ECO:0000255" key="2"/>
<evidence type="ECO:0000305" key="3"/>
<sequence>MGITKSLMIFFHIVLLAVSLSNNIILTSGAETTKFSYDHCFHLCVEGEYGSRECFVDCTQKGFWHGVCANKTTAKDPIHCCCYN</sequence>
<keyword id="KW-0929">Antimicrobial</keyword>
<keyword id="KW-1015">Disulfide bond</keyword>
<keyword id="KW-0295">Fungicide</keyword>
<keyword id="KW-0611">Plant defense</keyword>
<keyword id="KW-1185">Reference proteome</keyword>
<keyword id="KW-0964">Secreted</keyword>
<keyword id="KW-0732">Signal</keyword>
<dbReference type="EMBL" id="AC069326">
    <property type="status" value="NOT_ANNOTATED_CDS"/>
    <property type="molecule type" value="Genomic_DNA"/>
</dbReference>
<dbReference type="EMBL" id="CP002688">
    <property type="protein sequence ID" value="AED92665.1"/>
    <property type="molecule type" value="Genomic_DNA"/>
</dbReference>
<dbReference type="EMBL" id="BX832881">
    <property type="status" value="NOT_ANNOTATED_CDS"/>
    <property type="molecule type" value="mRNA"/>
</dbReference>
<dbReference type="RefSeq" id="NP_001031901.1">
    <property type="nucleotide sequence ID" value="NM_001036824.3"/>
</dbReference>
<dbReference type="PaxDb" id="3702-AT5G19172.1"/>
<dbReference type="ProteomicsDB" id="224114"/>
<dbReference type="EnsemblPlants" id="AT5G19172.1">
    <property type="protein sequence ID" value="AT5G19172.1"/>
    <property type="gene ID" value="AT5G19172"/>
</dbReference>
<dbReference type="GeneID" id="3770620"/>
<dbReference type="Gramene" id="AT5G19172.1">
    <property type="protein sequence ID" value="AT5G19172.1"/>
    <property type="gene ID" value="AT5G19172"/>
</dbReference>
<dbReference type="KEGG" id="ath:AT5G19172"/>
<dbReference type="Araport" id="AT5G19172"/>
<dbReference type="TAIR" id="AT5G19172"/>
<dbReference type="HOGENOM" id="CLU_165205_1_0_1"/>
<dbReference type="InParanoid" id="Q2V366"/>
<dbReference type="OMA" id="WHGVCAN"/>
<dbReference type="PhylomeDB" id="Q2V366"/>
<dbReference type="PRO" id="PR:Q2V366"/>
<dbReference type="Proteomes" id="UP000006548">
    <property type="component" value="Chromosome 5"/>
</dbReference>
<dbReference type="ExpressionAtlas" id="Q2V366">
    <property type="expression patterns" value="baseline and differential"/>
</dbReference>
<dbReference type="GO" id="GO:0005576">
    <property type="term" value="C:extracellular region"/>
    <property type="evidence" value="ECO:0007669"/>
    <property type="project" value="UniProtKB-SubCell"/>
</dbReference>
<dbReference type="GO" id="GO:0050832">
    <property type="term" value="P:defense response to fungus"/>
    <property type="evidence" value="ECO:0007669"/>
    <property type="project" value="UniProtKB-KW"/>
</dbReference>
<dbReference type="GO" id="GO:0031640">
    <property type="term" value="P:killing of cells of another organism"/>
    <property type="evidence" value="ECO:0007669"/>
    <property type="project" value="UniProtKB-KW"/>
</dbReference>
<dbReference type="InterPro" id="IPR056373">
    <property type="entry name" value="Defensin-like_dom"/>
</dbReference>
<dbReference type="Pfam" id="PF24552">
    <property type="entry name" value="Defensin"/>
    <property type="match status" value="1"/>
</dbReference>
<name>DEF49_ARATH</name>
<gene>
    <name type="ordered locus">At5g19172</name>
    <name type="ORF">T24G5</name>
</gene>
<feature type="signal peptide" evidence="2">
    <location>
        <begin position="1"/>
        <end position="29"/>
    </location>
</feature>
<feature type="chain" id="PRO_0000379631" description="Defensin-like protein 49">
    <location>
        <begin position="30"/>
        <end position="84"/>
    </location>
</feature>
<feature type="disulfide bond" evidence="1">
    <location>
        <begin position="40"/>
        <end position="82"/>
    </location>
</feature>
<feature type="disulfide bond" evidence="1">
    <location>
        <begin position="44"/>
        <end position="68"/>
    </location>
</feature>
<feature type="disulfide bond" evidence="1">
    <location>
        <begin position="54"/>
        <end position="80"/>
    </location>
</feature>
<feature type="disulfide bond" evidence="1">
    <location>
        <begin position="58"/>
        <end position="81"/>
    </location>
</feature>
<accession>Q2V366</accession>
<reference key="1">
    <citation type="journal article" date="2000" name="Nature">
        <title>Sequence and analysis of chromosome 5 of the plant Arabidopsis thaliana.</title>
        <authorList>
            <person name="Tabata S."/>
            <person name="Kaneko T."/>
            <person name="Nakamura Y."/>
            <person name="Kotani H."/>
            <person name="Kato T."/>
            <person name="Asamizu E."/>
            <person name="Miyajima N."/>
            <person name="Sasamoto S."/>
            <person name="Kimura T."/>
            <person name="Hosouchi T."/>
            <person name="Kawashima K."/>
            <person name="Kohara M."/>
            <person name="Matsumoto M."/>
            <person name="Matsuno A."/>
            <person name="Muraki A."/>
            <person name="Nakayama S."/>
            <person name="Nakazaki N."/>
            <person name="Naruo K."/>
            <person name="Okumura S."/>
            <person name="Shinpo S."/>
            <person name="Takeuchi C."/>
            <person name="Wada T."/>
            <person name="Watanabe A."/>
            <person name="Yamada M."/>
            <person name="Yasuda M."/>
            <person name="Sato S."/>
            <person name="de la Bastide M."/>
            <person name="Huang E."/>
            <person name="Spiegel L."/>
            <person name="Gnoj L."/>
            <person name="O'Shaughnessy A."/>
            <person name="Preston R."/>
            <person name="Habermann K."/>
            <person name="Murray J."/>
            <person name="Johnson D."/>
            <person name="Rohlfing T."/>
            <person name="Nelson J."/>
            <person name="Stoneking T."/>
            <person name="Pepin K."/>
            <person name="Spieth J."/>
            <person name="Sekhon M."/>
            <person name="Armstrong J."/>
            <person name="Becker M."/>
            <person name="Belter E."/>
            <person name="Cordum H."/>
            <person name="Cordes M."/>
            <person name="Courtney L."/>
            <person name="Courtney W."/>
            <person name="Dante M."/>
            <person name="Du H."/>
            <person name="Edwards J."/>
            <person name="Fryman J."/>
            <person name="Haakensen B."/>
            <person name="Lamar E."/>
            <person name="Latreille P."/>
            <person name="Leonard S."/>
            <person name="Meyer R."/>
            <person name="Mulvaney E."/>
            <person name="Ozersky P."/>
            <person name="Riley A."/>
            <person name="Strowmatt C."/>
            <person name="Wagner-McPherson C."/>
            <person name="Wollam A."/>
            <person name="Yoakum M."/>
            <person name="Bell M."/>
            <person name="Dedhia N."/>
            <person name="Parnell L."/>
            <person name="Shah R."/>
            <person name="Rodriguez M."/>
            <person name="Hoon See L."/>
            <person name="Vil D."/>
            <person name="Baker J."/>
            <person name="Kirchoff K."/>
            <person name="Toth K."/>
            <person name="King L."/>
            <person name="Bahret A."/>
            <person name="Miller B."/>
            <person name="Marra M.A."/>
            <person name="Martienssen R."/>
            <person name="McCombie W.R."/>
            <person name="Wilson R.K."/>
            <person name="Murphy G."/>
            <person name="Bancroft I."/>
            <person name="Volckaert G."/>
            <person name="Wambutt R."/>
            <person name="Duesterhoeft A."/>
            <person name="Stiekema W."/>
            <person name="Pohl T."/>
            <person name="Entian K.-D."/>
            <person name="Terryn N."/>
            <person name="Hartley N."/>
            <person name="Bent E."/>
            <person name="Johnson S."/>
            <person name="Langham S.-A."/>
            <person name="McCullagh B."/>
            <person name="Robben J."/>
            <person name="Grymonprez B."/>
            <person name="Zimmermann W."/>
            <person name="Ramsperger U."/>
            <person name="Wedler H."/>
            <person name="Balke K."/>
            <person name="Wedler E."/>
            <person name="Peters S."/>
            <person name="van Staveren M."/>
            <person name="Dirkse W."/>
            <person name="Mooijman P."/>
            <person name="Klein Lankhorst R."/>
            <person name="Weitzenegger T."/>
            <person name="Bothe G."/>
            <person name="Rose M."/>
            <person name="Hauf J."/>
            <person name="Berneiser S."/>
            <person name="Hempel S."/>
            <person name="Feldpausch M."/>
            <person name="Lamberth S."/>
            <person name="Villarroel R."/>
            <person name="Gielen J."/>
            <person name="Ardiles W."/>
            <person name="Bents O."/>
            <person name="Lemcke K."/>
            <person name="Kolesov G."/>
            <person name="Mayer K.F.X."/>
            <person name="Rudd S."/>
            <person name="Schoof H."/>
            <person name="Schueller C."/>
            <person name="Zaccaria P."/>
            <person name="Mewes H.-W."/>
            <person name="Bevan M."/>
            <person name="Fransz P.F."/>
        </authorList>
    </citation>
    <scope>NUCLEOTIDE SEQUENCE [LARGE SCALE GENOMIC DNA]</scope>
    <source>
        <strain>cv. Columbia</strain>
    </source>
</reference>
<reference key="2">
    <citation type="journal article" date="2017" name="Plant J.">
        <title>Araport11: a complete reannotation of the Arabidopsis thaliana reference genome.</title>
        <authorList>
            <person name="Cheng C.Y."/>
            <person name="Krishnakumar V."/>
            <person name="Chan A.P."/>
            <person name="Thibaud-Nissen F."/>
            <person name="Schobel S."/>
            <person name="Town C.D."/>
        </authorList>
    </citation>
    <scope>GENOME REANNOTATION</scope>
    <source>
        <strain>cv. Columbia</strain>
    </source>
</reference>
<reference key="3">
    <citation type="journal article" date="2004" name="Genome Res.">
        <title>Whole genome sequence comparisons and 'full-length' cDNA sequences: a combined approach to evaluate and improve Arabidopsis genome annotation.</title>
        <authorList>
            <person name="Castelli V."/>
            <person name="Aury J.-M."/>
            <person name="Jaillon O."/>
            <person name="Wincker P."/>
            <person name="Clepet C."/>
            <person name="Menard M."/>
            <person name="Cruaud C."/>
            <person name="Quetier F."/>
            <person name="Scarpelli C."/>
            <person name="Schaechter V."/>
            <person name="Temple G."/>
            <person name="Caboche M."/>
            <person name="Weissenbach J."/>
            <person name="Salanoubat M."/>
        </authorList>
    </citation>
    <scope>NUCLEOTIDE SEQUENCE [LARGE SCALE MRNA]</scope>
    <source>
        <strain>cv. Columbia</strain>
    </source>
</reference>
<reference key="4">
    <citation type="journal article" date="2005" name="Plant Physiol.">
        <title>Genome organization of more than 300 defensin-like genes in Arabidopsis.</title>
        <authorList>
            <person name="Silverstein K.A.T."/>
            <person name="Graham M.A."/>
            <person name="Paape T.D."/>
            <person name="VandenBosch K.A."/>
        </authorList>
    </citation>
    <scope>GENE FAMILY</scope>
</reference>
<comment type="subcellular location">
    <subcellularLocation>
        <location evidence="1">Secreted</location>
    </subcellularLocation>
</comment>
<comment type="similarity">
    <text evidence="3">Belongs to the DEFL family.</text>
</comment>
<proteinExistence type="inferred from homology"/>